<accession>P68202</accession>
<accession>P68201</accession>
<accession>Q6F435</accession>
<comment type="function">
    <molecule>Ubiquitin</molecule>
    <text evidence="1">Exists either covalently attached to another protein, or free (unanchored). When covalently bound, it is conjugated to target proteins via an isopeptide bond either as a monomer (monoubiquitin), a polymer linked via different Lys residues of the ubiquitin (polyubiquitin chains) or a linear polymer linked via the initiator Met of the ubiquitin (linear polyubiquitin chains). Polyubiquitin chains, when attached to a target protein, have different functions depending on the Lys residue of the ubiquitin that is linked: Lys-48-linked is involved in protein degradation via the proteasome. Linear polymer chains formed via attachment by the initiator Met lead to cell signaling. Ubiquitin is usually conjugated to Lys residues of target proteins, however, in rare cases, conjugation to Cys or Ser residues has been observed. When polyubiquitin is free (unanchored-polyubiquitin), it also has distinct roles, such as in activation of protein kinases, and in signaling (By similarity).</text>
</comment>
<comment type="function">
    <molecule>Small ribosomal subunit protein eS31</molecule>
    <text>Component of the 40S subunit of the ribosome.</text>
</comment>
<comment type="subunit">
    <molecule>Small ribosomal subunit protein eS31</molecule>
    <text evidence="1">Part of the 40S ribosomal subunit.</text>
</comment>
<comment type="subcellular location">
    <molecule>Ubiquitin</molecule>
    <subcellularLocation>
        <location evidence="1">Cytoplasm</location>
    </subcellularLocation>
    <subcellularLocation>
        <location evidence="1">Nucleus</location>
    </subcellularLocation>
</comment>
<comment type="miscellaneous">
    <text>Ubiquitin is synthesized as a polyubiquitin precursor with exact head to tail repeats, the number of repeats differs between species. In some species there is a final amino-acid after the last repeat. Some ubiquitin genes contain a single copy of ubiquitin fused to a ribosomal protein (either eL40 or eS31).</text>
</comment>
<comment type="similarity">
    <text evidence="3">In the N-terminal section; belongs to the ubiquitin family.</text>
</comment>
<comment type="similarity">
    <text evidence="3">In the C-terminal section; belongs to the eukaryotic ribosomal protein eS31 family.</text>
</comment>
<feature type="chain" id="PRO_0000114815" description="Ubiquitin">
    <location>
        <begin position="1"/>
        <end position="76"/>
    </location>
</feature>
<feature type="chain" id="PRO_0000137672" description="Small ribosomal subunit protein eS31">
    <location>
        <begin position="77"/>
        <end position="155"/>
    </location>
</feature>
<feature type="domain" description="Ubiquitin-like" evidence="2">
    <location>
        <begin position="1"/>
        <end position="76"/>
    </location>
</feature>
<feature type="zinc finger region" description="C4-type">
    <location>
        <begin position="121"/>
        <end position="144"/>
    </location>
</feature>
<feature type="site" description="Interacts with activating enzyme">
    <location>
        <position position="54"/>
    </location>
</feature>
<feature type="site" description="Essential for function">
    <location>
        <position position="68"/>
    </location>
</feature>
<feature type="site" description="Interacts with activating enzyme">
    <location>
        <position position="72"/>
    </location>
</feature>
<feature type="cross-link" description="Glycyl lysine isopeptide (Lys-Gly) (interchain with G-Cter in ubiquitin)" evidence="1">
    <location>
        <position position="48"/>
    </location>
</feature>
<feature type="cross-link" description="Glycyl lysine isopeptide (Gly-Lys) (interchain with K-? in acceptor proteins)" evidence="2">
    <location>
        <position position="76"/>
    </location>
</feature>
<keyword id="KW-0963">Cytoplasm</keyword>
<keyword id="KW-1017">Isopeptide bond</keyword>
<keyword id="KW-0479">Metal-binding</keyword>
<keyword id="KW-0539">Nucleus</keyword>
<keyword id="KW-0687">Ribonucleoprotein</keyword>
<keyword id="KW-0689">Ribosomal protein</keyword>
<keyword id="KW-0832">Ubl conjugation</keyword>
<keyword id="KW-0862">Zinc</keyword>
<keyword id="KW-0863">Zinc-finger</keyword>
<reference key="1">
    <citation type="submission" date="2004-07" db="EMBL/GenBank/DDBJ databases">
        <title>Construction and EST analysis of full-length cDNA libraries from immunized diamond back moth, Plutella xylostella.</title>
        <authorList>
            <person name="Eum J.H."/>
            <person name="Yoe S.M."/>
            <person name="Seo Y.R."/>
            <person name="Kang S.W."/>
            <person name="Han S.S."/>
        </authorList>
    </citation>
    <scope>NUCLEOTIDE SEQUENCE [LARGE SCALE MRNA]</scope>
</reference>
<dbReference type="EMBL" id="AB180455">
    <property type="protein sequence ID" value="BAD26699.1"/>
    <property type="molecule type" value="mRNA"/>
</dbReference>
<dbReference type="RefSeq" id="XP_011549597.1">
    <property type="nucleotide sequence ID" value="XM_011551295.3"/>
</dbReference>
<dbReference type="SMR" id="P68202"/>
<dbReference type="GeneID" id="105381543"/>
<dbReference type="KEGG" id="pxy:105381543"/>
<dbReference type="CTD" id="6233"/>
<dbReference type="OrthoDB" id="428577at2759"/>
<dbReference type="GO" id="GO:0005737">
    <property type="term" value="C:cytoplasm"/>
    <property type="evidence" value="ECO:0007669"/>
    <property type="project" value="UniProtKB-SubCell"/>
</dbReference>
<dbReference type="GO" id="GO:0005634">
    <property type="term" value="C:nucleus"/>
    <property type="evidence" value="ECO:0007669"/>
    <property type="project" value="UniProtKB-SubCell"/>
</dbReference>
<dbReference type="GO" id="GO:1990904">
    <property type="term" value="C:ribonucleoprotein complex"/>
    <property type="evidence" value="ECO:0007669"/>
    <property type="project" value="UniProtKB-KW"/>
</dbReference>
<dbReference type="GO" id="GO:0005840">
    <property type="term" value="C:ribosome"/>
    <property type="evidence" value="ECO:0007669"/>
    <property type="project" value="UniProtKB-KW"/>
</dbReference>
<dbReference type="GO" id="GO:0003735">
    <property type="term" value="F:structural constituent of ribosome"/>
    <property type="evidence" value="ECO:0007669"/>
    <property type="project" value="InterPro"/>
</dbReference>
<dbReference type="GO" id="GO:0008270">
    <property type="term" value="F:zinc ion binding"/>
    <property type="evidence" value="ECO:0007669"/>
    <property type="project" value="UniProtKB-KW"/>
</dbReference>
<dbReference type="GO" id="GO:0006412">
    <property type="term" value="P:translation"/>
    <property type="evidence" value="ECO:0007669"/>
    <property type="project" value="InterPro"/>
</dbReference>
<dbReference type="CDD" id="cd01803">
    <property type="entry name" value="Ubl_ubiquitin"/>
    <property type="match status" value="1"/>
</dbReference>
<dbReference type="FunFam" id="3.10.20.90:FF:000008">
    <property type="entry name" value="Ubiquitin-40S ribosomal protein S27a"/>
    <property type="match status" value="1"/>
</dbReference>
<dbReference type="Gene3D" id="6.20.50.150">
    <property type="match status" value="1"/>
</dbReference>
<dbReference type="Gene3D" id="3.10.20.90">
    <property type="entry name" value="Phosphatidylinositol 3-kinase Catalytic Subunit, Chain A, domain 1"/>
    <property type="match status" value="1"/>
</dbReference>
<dbReference type="InterPro" id="IPR002906">
    <property type="entry name" value="Ribosomal_eS31"/>
</dbReference>
<dbReference type="InterPro" id="IPR038582">
    <property type="entry name" value="Ribosomal_eS31_euk-type_sf"/>
</dbReference>
<dbReference type="InterPro" id="IPR011332">
    <property type="entry name" value="Ribosomal_zn-bd"/>
</dbReference>
<dbReference type="InterPro" id="IPR000626">
    <property type="entry name" value="Ubiquitin-like_dom"/>
</dbReference>
<dbReference type="InterPro" id="IPR029071">
    <property type="entry name" value="Ubiquitin-like_domsf"/>
</dbReference>
<dbReference type="InterPro" id="IPR019954">
    <property type="entry name" value="Ubiquitin_CS"/>
</dbReference>
<dbReference type="InterPro" id="IPR019956">
    <property type="entry name" value="Ubiquitin_dom"/>
</dbReference>
<dbReference type="InterPro" id="IPR050158">
    <property type="entry name" value="Ubiquitin_ubiquitin-like"/>
</dbReference>
<dbReference type="PANTHER" id="PTHR10666">
    <property type="entry name" value="UBIQUITIN"/>
    <property type="match status" value="1"/>
</dbReference>
<dbReference type="Pfam" id="PF01599">
    <property type="entry name" value="Ribosomal_S27"/>
    <property type="match status" value="1"/>
</dbReference>
<dbReference type="Pfam" id="PF00240">
    <property type="entry name" value="ubiquitin"/>
    <property type="match status" value="1"/>
</dbReference>
<dbReference type="PRINTS" id="PR00348">
    <property type="entry name" value="UBIQUITIN"/>
</dbReference>
<dbReference type="SMART" id="SM01402">
    <property type="entry name" value="Ribosomal_S27"/>
    <property type="match status" value="1"/>
</dbReference>
<dbReference type="SMART" id="SM00213">
    <property type="entry name" value="UBQ"/>
    <property type="match status" value="1"/>
</dbReference>
<dbReference type="SUPFAM" id="SSF54236">
    <property type="entry name" value="Ubiquitin-like"/>
    <property type="match status" value="1"/>
</dbReference>
<dbReference type="SUPFAM" id="SSF57829">
    <property type="entry name" value="Zn-binding ribosomal proteins"/>
    <property type="match status" value="1"/>
</dbReference>
<dbReference type="PROSITE" id="PS00299">
    <property type="entry name" value="UBIQUITIN_1"/>
    <property type="match status" value="1"/>
</dbReference>
<dbReference type="PROSITE" id="PS50053">
    <property type="entry name" value="UBIQUITIN_2"/>
    <property type="match status" value="1"/>
</dbReference>
<organism>
    <name type="scientific">Plutella xylostella</name>
    <name type="common">Diamondback moth</name>
    <name type="synonym">Plutella maculipennis</name>
    <dbReference type="NCBI Taxonomy" id="51655"/>
    <lineage>
        <taxon>Eukaryota</taxon>
        <taxon>Metazoa</taxon>
        <taxon>Ecdysozoa</taxon>
        <taxon>Arthropoda</taxon>
        <taxon>Hexapoda</taxon>
        <taxon>Insecta</taxon>
        <taxon>Pterygota</taxon>
        <taxon>Neoptera</taxon>
        <taxon>Endopterygota</taxon>
        <taxon>Lepidoptera</taxon>
        <taxon>Glossata</taxon>
        <taxon>Ditrysia</taxon>
        <taxon>Yponomeutoidea</taxon>
        <taxon>Plutellidae</taxon>
        <taxon>Plutella</taxon>
    </lineage>
</organism>
<proteinExistence type="evidence at transcript level"/>
<name>RS27A_PLUXY</name>
<evidence type="ECO:0000250" key="1"/>
<evidence type="ECO:0000255" key="2">
    <source>
        <dbReference type="PROSITE-ProRule" id="PRU00214"/>
    </source>
</evidence>
<evidence type="ECO:0000305" key="3"/>
<sequence>MQIFVKTLTGKTITLEVEPSDTIENVKAKIQDKEGIPPDQQRLIFAGKQLEDGRTLSDYNIQKESTLHLVLRLRGGAKKRKKKNYSTPKKIKHKKKKVKLAVLRFYKVDENGKIHRLRRECTSEQCGAGVFMAVMEDRHYCGKCHRTMVFKDDDK</sequence>
<protein>
    <recommendedName>
        <fullName evidence="3">Ubiquitin-ribosomal protein eS31 fusion protein</fullName>
    </recommendedName>
    <component>
        <recommendedName>
            <fullName>Ubiquitin</fullName>
        </recommendedName>
    </component>
    <component>
        <recommendedName>
            <fullName evidence="3">Small ribosomal subunit protein eS31</fullName>
        </recommendedName>
        <alternativeName>
            <fullName>40S ribosomal protein S27a</fullName>
        </alternativeName>
    </component>
</protein>